<accession>P64420</accession>
<accession>Q8XGG9</accession>
<proteinExistence type="inferred from homology"/>
<dbReference type="EMBL" id="AL513382">
    <property type="protein sequence ID" value="CAD05961.1"/>
    <property type="molecule type" value="Genomic_DNA"/>
</dbReference>
<dbReference type="EMBL" id="AE014613">
    <property type="protein sequence ID" value="AAO70317.1"/>
    <property type="molecule type" value="Genomic_DNA"/>
</dbReference>
<dbReference type="RefSeq" id="NP_457248.1">
    <property type="nucleotide sequence ID" value="NC_003198.1"/>
</dbReference>
<dbReference type="RefSeq" id="WP_000544461.1">
    <property type="nucleotide sequence ID" value="NZ_WSUR01000005.1"/>
</dbReference>
<dbReference type="SMR" id="P64420"/>
<dbReference type="STRING" id="220341.gene:17586871"/>
<dbReference type="KEGG" id="stt:t2756"/>
<dbReference type="KEGG" id="sty:STY2976"/>
<dbReference type="PATRIC" id="fig|220341.7.peg.3031"/>
<dbReference type="eggNOG" id="COG0375">
    <property type="taxonomic scope" value="Bacteria"/>
</dbReference>
<dbReference type="HOGENOM" id="CLU_126929_0_0_6"/>
<dbReference type="OMA" id="RITAVWM"/>
<dbReference type="OrthoDB" id="288014at2"/>
<dbReference type="Proteomes" id="UP000000541">
    <property type="component" value="Chromosome"/>
</dbReference>
<dbReference type="Proteomes" id="UP000002670">
    <property type="component" value="Chromosome"/>
</dbReference>
<dbReference type="GO" id="GO:0016151">
    <property type="term" value="F:nickel cation binding"/>
    <property type="evidence" value="ECO:0007669"/>
    <property type="project" value="UniProtKB-UniRule"/>
</dbReference>
<dbReference type="GO" id="GO:0008270">
    <property type="term" value="F:zinc ion binding"/>
    <property type="evidence" value="ECO:0007669"/>
    <property type="project" value="UniProtKB-UniRule"/>
</dbReference>
<dbReference type="GO" id="GO:0051604">
    <property type="term" value="P:protein maturation"/>
    <property type="evidence" value="ECO:0007669"/>
    <property type="project" value="InterPro"/>
</dbReference>
<dbReference type="GO" id="GO:0036211">
    <property type="term" value="P:protein modification process"/>
    <property type="evidence" value="ECO:0007669"/>
    <property type="project" value="UniProtKB-UniRule"/>
</dbReference>
<dbReference type="FunFam" id="3.30.2320.80:FF:000001">
    <property type="entry name" value="Hydrogenase maturation factor HypA"/>
    <property type="match status" value="1"/>
</dbReference>
<dbReference type="Gene3D" id="3.30.2320.80">
    <property type="match status" value="1"/>
</dbReference>
<dbReference type="HAMAP" id="MF_00213">
    <property type="entry name" value="HypA_HybF"/>
    <property type="match status" value="1"/>
</dbReference>
<dbReference type="InterPro" id="IPR020538">
    <property type="entry name" value="Hydgase_Ni_incorp_HypA/HybF_CS"/>
</dbReference>
<dbReference type="InterPro" id="IPR000688">
    <property type="entry name" value="HypA/HybF"/>
</dbReference>
<dbReference type="NCBIfam" id="TIGR00100">
    <property type="entry name" value="hypA"/>
    <property type="match status" value="1"/>
</dbReference>
<dbReference type="NCBIfam" id="NF002979">
    <property type="entry name" value="PRK03681.1"/>
    <property type="match status" value="1"/>
</dbReference>
<dbReference type="NCBIfam" id="NF009046">
    <property type="entry name" value="PRK12380.1"/>
    <property type="match status" value="1"/>
</dbReference>
<dbReference type="PANTHER" id="PTHR34535">
    <property type="entry name" value="HYDROGENASE MATURATION FACTOR HYPA"/>
    <property type="match status" value="1"/>
</dbReference>
<dbReference type="PANTHER" id="PTHR34535:SF3">
    <property type="entry name" value="HYDROGENASE MATURATION FACTOR HYPA"/>
    <property type="match status" value="1"/>
</dbReference>
<dbReference type="Pfam" id="PF01155">
    <property type="entry name" value="HypA"/>
    <property type="match status" value="1"/>
</dbReference>
<dbReference type="PIRSF" id="PIRSF004761">
    <property type="entry name" value="Hydrgn_mat_HypA"/>
    <property type="match status" value="1"/>
</dbReference>
<dbReference type="PROSITE" id="PS01249">
    <property type="entry name" value="HYPA"/>
    <property type="match status" value="1"/>
</dbReference>
<feature type="chain" id="PRO_0000129060" description="Hydrogenase maturation factor HypA">
    <location>
        <begin position="1"/>
        <end position="118"/>
    </location>
</feature>
<feature type="binding site" evidence="1">
    <location>
        <position position="2"/>
    </location>
    <ligand>
        <name>Ni(2+)</name>
        <dbReference type="ChEBI" id="CHEBI:49786"/>
    </ligand>
</feature>
<feature type="binding site" evidence="1">
    <location>
        <position position="73"/>
    </location>
    <ligand>
        <name>Zn(2+)</name>
        <dbReference type="ChEBI" id="CHEBI:29105"/>
    </ligand>
</feature>
<feature type="binding site" evidence="1">
    <location>
        <position position="76"/>
    </location>
    <ligand>
        <name>Zn(2+)</name>
        <dbReference type="ChEBI" id="CHEBI:29105"/>
    </ligand>
</feature>
<feature type="binding site" evidence="1">
    <location>
        <position position="90"/>
    </location>
    <ligand>
        <name>Zn(2+)</name>
        <dbReference type="ChEBI" id="CHEBI:29105"/>
    </ligand>
</feature>
<feature type="binding site" evidence="1">
    <location>
        <position position="93"/>
    </location>
    <ligand>
        <name>Zn(2+)</name>
        <dbReference type="ChEBI" id="CHEBI:29105"/>
    </ligand>
</feature>
<organism>
    <name type="scientific">Salmonella typhi</name>
    <dbReference type="NCBI Taxonomy" id="90370"/>
    <lineage>
        <taxon>Bacteria</taxon>
        <taxon>Pseudomonadati</taxon>
        <taxon>Pseudomonadota</taxon>
        <taxon>Gammaproteobacteria</taxon>
        <taxon>Enterobacterales</taxon>
        <taxon>Enterobacteriaceae</taxon>
        <taxon>Salmonella</taxon>
    </lineage>
</organism>
<evidence type="ECO:0000255" key="1">
    <source>
        <dbReference type="HAMAP-Rule" id="MF_00213"/>
    </source>
</evidence>
<reference key="1">
    <citation type="journal article" date="2001" name="Nature">
        <title>Complete genome sequence of a multiple drug resistant Salmonella enterica serovar Typhi CT18.</title>
        <authorList>
            <person name="Parkhill J."/>
            <person name="Dougan G."/>
            <person name="James K.D."/>
            <person name="Thomson N.R."/>
            <person name="Pickard D."/>
            <person name="Wain J."/>
            <person name="Churcher C.M."/>
            <person name="Mungall K.L."/>
            <person name="Bentley S.D."/>
            <person name="Holden M.T.G."/>
            <person name="Sebaihia M."/>
            <person name="Baker S."/>
            <person name="Basham D."/>
            <person name="Brooks K."/>
            <person name="Chillingworth T."/>
            <person name="Connerton P."/>
            <person name="Cronin A."/>
            <person name="Davis P."/>
            <person name="Davies R.M."/>
            <person name="Dowd L."/>
            <person name="White N."/>
            <person name="Farrar J."/>
            <person name="Feltwell T."/>
            <person name="Hamlin N."/>
            <person name="Haque A."/>
            <person name="Hien T.T."/>
            <person name="Holroyd S."/>
            <person name="Jagels K."/>
            <person name="Krogh A."/>
            <person name="Larsen T.S."/>
            <person name="Leather S."/>
            <person name="Moule S."/>
            <person name="O'Gaora P."/>
            <person name="Parry C."/>
            <person name="Quail M.A."/>
            <person name="Rutherford K.M."/>
            <person name="Simmonds M."/>
            <person name="Skelton J."/>
            <person name="Stevens K."/>
            <person name="Whitehead S."/>
            <person name="Barrell B.G."/>
        </authorList>
    </citation>
    <scope>NUCLEOTIDE SEQUENCE [LARGE SCALE GENOMIC DNA]</scope>
    <source>
        <strain>CT18</strain>
    </source>
</reference>
<reference key="2">
    <citation type="journal article" date="2003" name="J. Bacteriol.">
        <title>Comparative genomics of Salmonella enterica serovar Typhi strains Ty2 and CT18.</title>
        <authorList>
            <person name="Deng W."/>
            <person name="Liou S.-R."/>
            <person name="Plunkett G. III"/>
            <person name="Mayhew G.F."/>
            <person name="Rose D.J."/>
            <person name="Burland V."/>
            <person name="Kodoyianni V."/>
            <person name="Schwartz D.C."/>
            <person name="Blattner F.R."/>
        </authorList>
    </citation>
    <scope>NUCLEOTIDE SEQUENCE [LARGE SCALE GENOMIC DNA]</scope>
    <source>
        <strain>ATCC 700931 / Ty2</strain>
    </source>
</reference>
<protein>
    <recommendedName>
        <fullName evidence="1">Hydrogenase maturation factor HypA</fullName>
    </recommendedName>
</protein>
<gene>
    <name evidence="1" type="primary">hypA</name>
    <name type="ordered locus">STY2976</name>
    <name type="ordered locus">t2756</name>
</gene>
<sequence>MHEITLCQRALELIEQQASAYGAKRVTAVWIKIGAFSCVETSALSFCFDLVCRGTIAEGCKLHLEEQEAECWCEHCQQYVTLLTHRVRRCPQCHSDTLRIVADDGLQIRRIEIDETED</sequence>
<name>HYPA_SALTI</name>
<comment type="function">
    <text evidence="1">Involved in the maturation of [NiFe] hydrogenases. Required for nickel insertion into the metal center of the hydrogenase.</text>
</comment>
<comment type="similarity">
    <text evidence="1">Belongs to the HypA/HybF family.</text>
</comment>
<keyword id="KW-0479">Metal-binding</keyword>
<keyword id="KW-0533">Nickel</keyword>
<keyword id="KW-0862">Zinc</keyword>